<dbReference type="EC" id="3.1.26.11" evidence="1"/>
<dbReference type="EMBL" id="CP000854">
    <property type="protein sequence ID" value="ACC42143.1"/>
    <property type="molecule type" value="Genomic_DNA"/>
</dbReference>
<dbReference type="RefSeq" id="WP_012395339.1">
    <property type="nucleotide sequence ID" value="NC_010612.1"/>
</dbReference>
<dbReference type="SMR" id="B2HMC3"/>
<dbReference type="STRING" id="216594.MMAR_3727"/>
<dbReference type="KEGG" id="mmi:MMAR_3727"/>
<dbReference type="eggNOG" id="COG1234">
    <property type="taxonomic scope" value="Bacteria"/>
</dbReference>
<dbReference type="HOGENOM" id="CLU_031317_0_0_11"/>
<dbReference type="OrthoDB" id="4137979at2"/>
<dbReference type="Proteomes" id="UP000001190">
    <property type="component" value="Chromosome"/>
</dbReference>
<dbReference type="GO" id="GO:0042781">
    <property type="term" value="F:3'-tRNA processing endoribonuclease activity"/>
    <property type="evidence" value="ECO:0007669"/>
    <property type="project" value="UniProtKB-UniRule"/>
</dbReference>
<dbReference type="GO" id="GO:0046872">
    <property type="term" value="F:metal ion binding"/>
    <property type="evidence" value="ECO:0007669"/>
    <property type="project" value="UniProtKB-KW"/>
</dbReference>
<dbReference type="CDD" id="cd07719">
    <property type="entry name" value="arylsulfatase_AtsA-like_MBL-fold"/>
    <property type="match status" value="1"/>
</dbReference>
<dbReference type="Gene3D" id="3.60.15.10">
    <property type="entry name" value="Ribonuclease Z/Hydroxyacylglutathione hydrolase-like"/>
    <property type="match status" value="1"/>
</dbReference>
<dbReference type="HAMAP" id="MF_01818">
    <property type="entry name" value="RNase_Z_BN"/>
    <property type="match status" value="1"/>
</dbReference>
<dbReference type="InterPro" id="IPR044094">
    <property type="entry name" value="AtsA-like_MBL-fold"/>
</dbReference>
<dbReference type="InterPro" id="IPR001279">
    <property type="entry name" value="Metallo-B-lactamas"/>
</dbReference>
<dbReference type="InterPro" id="IPR036866">
    <property type="entry name" value="RibonucZ/Hydroxyglut_hydro"/>
</dbReference>
<dbReference type="InterPro" id="IPR013471">
    <property type="entry name" value="RNase_Z/BN"/>
</dbReference>
<dbReference type="NCBIfam" id="NF000806">
    <property type="entry name" value="PRK00055.2-4"/>
    <property type="match status" value="1"/>
</dbReference>
<dbReference type="PANTHER" id="PTHR46018">
    <property type="entry name" value="ZINC PHOSPHODIESTERASE ELAC PROTEIN 1"/>
    <property type="match status" value="1"/>
</dbReference>
<dbReference type="PANTHER" id="PTHR46018:SF2">
    <property type="entry name" value="ZINC PHOSPHODIESTERASE ELAC PROTEIN 1"/>
    <property type="match status" value="1"/>
</dbReference>
<dbReference type="Pfam" id="PF12706">
    <property type="entry name" value="Lactamase_B_2"/>
    <property type="match status" value="1"/>
</dbReference>
<dbReference type="SMART" id="SM00849">
    <property type="entry name" value="Lactamase_B"/>
    <property type="match status" value="1"/>
</dbReference>
<dbReference type="SUPFAM" id="SSF56281">
    <property type="entry name" value="Metallo-hydrolase/oxidoreductase"/>
    <property type="match status" value="1"/>
</dbReference>
<protein>
    <recommendedName>
        <fullName evidence="1">Ribonuclease Z</fullName>
        <shortName evidence="1">RNase Z</shortName>
        <ecNumber evidence="1">3.1.26.11</ecNumber>
    </recommendedName>
    <alternativeName>
        <fullName evidence="1">tRNA 3 endonuclease</fullName>
    </alternativeName>
    <alternativeName>
        <fullName evidence="1">tRNase Z</fullName>
    </alternativeName>
</protein>
<keyword id="KW-0255">Endonuclease</keyword>
<keyword id="KW-0378">Hydrolase</keyword>
<keyword id="KW-0479">Metal-binding</keyword>
<keyword id="KW-0540">Nuclease</keyword>
<keyword id="KW-1185">Reference proteome</keyword>
<keyword id="KW-0819">tRNA processing</keyword>
<keyword id="KW-0862">Zinc</keyword>
<sequence>MIEITLLGTGSPIPDPDRAGPSTLVRAGGQVFLVDCGRGVLQRAAAVGVGAAGLSAVLLTHLHSDHIAELGDVLITSWVTNFAADPAPLQVIGPPGTAETVDAMLKAFGRDIGYRIAHHADLNAPPPIEVHEYTDGTVWDRDGVAIRVAPTDHRPVAPTIGFRVEFDGASAVLAGDTVPCPSLDELAAGAGALVHTVIRKDIITNFPQQRVKDICDYHSSVQEAAATAARAGVGTLVMTHYVPAIIAGQEDQWRALAATEFGGRIELGNDLHRVEVHAR</sequence>
<gene>
    <name evidence="1" type="primary">rnz</name>
    <name type="ordered locus">MMAR_3727</name>
</gene>
<name>RNZ_MYCMM</name>
<proteinExistence type="inferred from homology"/>
<accession>B2HMC3</accession>
<organism>
    <name type="scientific">Mycobacterium marinum (strain ATCC BAA-535 / M)</name>
    <dbReference type="NCBI Taxonomy" id="216594"/>
    <lineage>
        <taxon>Bacteria</taxon>
        <taxon>Bacillati</taxon>
        <taxon>Actinomycetota</taxon>
        <taxon>Actinomycetes</taxon>
        <taxon>Mycobacteriales</taxon>
        <taxon>Mycobacteriaceae</taxon>
        <taxon>Mycobacterium</taxon>
        <taxon>Mycobacterium ulcerans group</taxon>
    </lineage>
</organism>
<comment type="function">
    <text evidence="1">Zinc phosphodiesterase, which displays some tRNA 3'-processing endonuclease activity. Probably involved in tRNA maturation, by removing a 3'-trailer from precursor tRNA.</text>
</comment>
<comment type="catalytic activity">
    <reaction evidence="1">
        <text>Endonucleolytic cleavage of RNA, removing extra 3' nucleotides from tRNA precursor, generating 3' termini of tRNAs. A 3'-hydroxy group is left at the tRNA terminus and a 5'-phosphoryl group is left at the trailer molecule.</text>
        <dbReference type="EC" id="3.1.26.11"/>
    </reaction>
</comment>
<comment type="cofactor">
    <cofactor evidence="1">
        <name>Zn(2+)</name>
        <dbReference type="ChEBI" id="CHEBI:29105"/>
    </cofactor>
    <text evidence="1">Binds 2 Zn(2+) ions.</text>
</comment>
<comment type="subunit">
    <text evidence="1">Homodimer.</text>
</comment>
<comment type="similarity">
    <text evidence="1">Belongs to the RNase Z family.</text>
</comment>
<evidence type="ECO:0000255" key="1">
    <source>
        <dbReference type="HAMAP-Rule" id="MF_01818"/>
    </source>
</evidence>
<feature type="chain" id="PRO_1000187973" description="Ribonuclease Z">
    <location>
        <begin position="1"/>
        <end position="279"/>
    </location>
</feature>
<feature type="active site" description="Proton acceptor" evidence="1">
    <location>
        <position position="65"/>
    </location>
</feature>
<feature type="binding site" evidence="1">
    <location>
        <position position="61"/>
    </location>
    <ligand>
        <name>Zn(2+)</name>
        <dbReference type="ChEBI" id="CHEBI:29105"/>
        <label>1</label>
        <note>catalytic</note>
    </ligand>
</feature>
<feature type="binding site" evidence="1">
    <location>
        <position position="63"/>
    </location>
    <ligand>
        <name>Zn(2+)</name>
        <dbReference type="ChEBI" id="CHEBI:29105"/>
        <label>1</label>
        <note>catalytic</note>
    </ligand>
</feature>
<feature type="binding site" evidence="1">
    <location>
        <position position="65"/>
    </location>
    <ligand>
        <name>Zn(2+)</name>
        <dbReference type="ChEBI" id="CHEBI:29105"/>
        <label>2</label>
        <note>catalytic</note>
    </ligand>
</feature>
<feature type="binding site" evidence="1">
    <location>
        <position position="66"/>
    </location>
    <ligand>
        <name>Zn(2+)</name>
        <dbReference type="ChEBI" id="CHEBI:29105"/>
        <label>2</label>
        <note>catalytic</note>
    </ligand>
</feature>
<feature type="binding site" evidence="1">
    <location>
        <position position="153"/>
    </location>
    <ligand>
        <name>Zn(2+)</name>
        <dbReference type="ChEBI" id="CHEBI:29105"/>
        <label>1</label>
        <note>catalytic</note>
    </ligand>
</feature>
<feature type="binding site" evidence="1">
    <location>
        <position position="176"/>
    </location>
    <ligand>
        <name>Zn(2+)</name>
        <dbReference type="ChEBI" id="CHEBI:29105"/>
        <label>1</label>
        <note>catalytic</note>
    </ligand>
</feature>
<feature type="binding site" evidence="1">
    <location>
        <position position="176"/>
    </location>
    <ligand>
        <name>Zn(2+)</name>
        <dbReference type="ChEBI" id="CHEBI:29105"/>
        <label>2</label>
        <note>catalytic</note>
    </ligand>
</feature>
<feature type="binding site" evidence="1">
    <location>
        <position position="240"/>
    </location>
    <ligand>
        <name>Zn(2+)</name>
        <dbReference type="ChEBI" id="CHEBI:29105"/>
        <label>2</label>
        <note>catalytic</note>
    </ligand>
</feature>
<reference key="1">
    <citation type="journal article" date="2008" name="Genome Res.">
        <title>Insights from the complete genome sequence of Mycobacterium marinum on the evolution of Mycobacterium tuberculosis.</title>
        <authorList>
            <person name="Stinear T.P."/>
            <person name="Seemann T."/>
            <person name="Harrison P.F."/>
            <person name="Jenkin G.A."/>
            <person name="Davies J.K."/>
            <person name="Johnson P.D."/>
            <person name="Abdellah Z."/>
            <person name="Arrowsmith C."/>
            <person name="Chillingworth T."/>
            <person name="Churcher C."/>
            <person name="Clarke K."/>
            <person name="Cronin A."/>
            <person name="Davis P."/>
            <person name="Goodhead I."/>
            <person name="Holroyd N."/>
            <person name="Jagels K."/>
            <person name="Lord A."/>
            <person name="Moule S."/>
            <person name="Mungall K."/>
            <person name="Norbertczak H."/>
            <person name="Quail M.A."/>
            <person name="Rabbinowitsch E."/>
            <person name="Walker D."/>
            <person name="White B."/>
            <person name="Whitehead S."/>
            <person name="Small P.L."/>
            <person name="Brosch R."/>
            <person name="Ramakrishnan L."/>
            <person name="Fischbach M.A."/>
            <person name="Parkhill J."/>
            <person name="Cole S.T."/>
        </authorList>
    </citation>
    <scope>NUCLEOTIDE SEQUENCE [LARGE SCALE GENOMIC DNA]</scope>
    <source>
        <strain>ATCC BAA-535 / M</strain>
    </source>
</reference>